<organism>
    <name type="scientific">Janthinobacterium sp. (strain Marseille)</name>
    <name type="common">Minibacterium massiliensis</name>
    <dbReference type="NCBI Taxonomy" id="375286"/>
    <lineage>
        <taxon>Bacteria</taxon>
        <taxon>Pseudomonadati</taxon>
        <taxon>Pseudomonadota</taxon>
        <taxon>Betaproteobacteria</taxon>
        <taxon>Burkholderiales</taxon>
        <taxon>Oxalobacteraceae</taxon>
        <taxon>Janthinobacterium</taxon>
    </lineage>
</organism>
<feature type="chain" id="PRO_1000064185" description="Glycerol-3-phosphate acyltransferase">
    <location>
        <begin position="1"/>
        <end position="201"/>
    </location>
</feature>
<feature type="transmembrane region" description="Helical" evidence="1">
    <location>
        <begin position="3"/>
        <end position="23"/>
    </location>
</feature>
<feature type="transmembrane region" description="Helical" evidence="1">
    <location>
        <begin position="51"/>
        <end position="71"/>
    </location>
</feature>
<feature type="transmembrane region" description="Helical" evidence="1">
    <location>
        <begin position="85"/>
        <end position="105"/>
    </location>
</feature>
<feature type="transmembrane region" description="Helical" evidence="1">
    <location>
        <begin position="116"/>
        <end position="136"/>
    </location>
</feature>
<feature type="transmembrane region" description="Helical" evidence="1">
    <location>
        <begin position="137"/>
        <end position="157"/>
    </location>
</feature>
<feature type="transmembrane region" description="Helical" evidence="1">
    <location>
        <begin position="158"/>
        <end position="178"/>
    </location>
</feature>
<protein>
    <recommendedName>
        <fullName evidence="1">Glycerol-3-phosphate acyltransferase</fullName>
    </recommendedName>
    <alternativeName>
        <fullName evidence="1">Acyl-PO4 G3P acyltransferase</fullName>
    </alternativeName>
    <alternativeName>
        <fullName evidence="1">Acyl-phosphate--glycerol-3-phosphate acyltransferase</fullName>
    </alternativeName>
    <alternativeName>
        <fullName evidence="1">G3P acyltransferase</fullName>
        <shortName evidence="1">GPAT</shortName>
        <ecNumber evidence="1">2.3.1.275</ecNumber>
    </alternativeName>
    <alternativeName>
        <fullName evidence="1">Lysophosphatidic acid synthase</fullName>
        <shortName evidence="1">LPA synthase</shortName>
    </alternativeName>
</protein>
<keyword id="KW-0997">Cell inner membrane</keyword>
<keyword id="KW-1003">Cell membrane</keyword>
<keyword id="KW-0444">Lipid biosynthesis</keyword>
<keyword id="KW-0443">Lipid metabolism</keyword>
<keyword id="KW-0472">Membrane</keyword>
<keyword id="KW-0594">Phospholipid biosynthesis</keyword>
<keyword id="KW-1208">Phospholipid metabolism</keyword>
<keyword id="KW-0808">Transferase</keyword>
<keyword id="KW-0812">Transmembrane</keyword>
<keyword id="KW-1133">Transmembrane helix</keyword>
<gene>
    <name evidence="1" type="primary">plsY</name>
    <name type="ordered locus">mma_0477</name>
</gene>
<name>PLSY_JANMA</name>
<proteinExistence type="inferred from homology"/>
<comment type="function">
    <text evidence="1">Catalyzes the transfer of an acyl group from acyl-phosphate (acyl-PO(4)) to glycerol-3-phosphate (G3P) to form lysophosphatidic acid (LPA). This enzyme utilizes acyl-phosphate as fatty acyl donor, but not acyl-CoA or acyl-ACP.</text>
</comment>
<comment type="catalytic activity">
    <reaction evidence="1">
        <text>an acyl phosphate + sn-glycerol 3-phosphate = a 1-acyl-sn-glycero-3-phosphate + phosphate</text>
        <dbReference type="Rhea" id="RHEA:34075"/>
        <dbReference type="ChEBI" id="CHEBI:43474"/>
        <dbReference type="ChEBI" id="CHEBI:57597"/>
        <dbReference type="ChEBI" id="CHEBI:57970"/>
        <dbReference type="ChEBI" id="CHEBI:59918"/>
        <dbReference type="EC" id="2.3.1.275"/>
    </reaction>
</comment>
<comment type="pathway">
    <text evidence="1">Lipid metabolism; phospholipid metabolism.</text>
</comment>
<comment type="subunit">
    <text evidence="1">Probably interacts with PlsX.</text>
</comment>
<comment type="subcellular location">
    <subcellularLocation>
        <location evidence="1">Cell inner membrane</location>
        <topology evidence="1">Multi-pass membrane protein</topology>
    </subcellularLocation>
</comment>
<comment type="similarity">
    <text evidence="1">Belongs to the PlsY family.</text>
</comment>
<sequence length="201" mass="21343">MNTVLFALGAYLIGSISFAVVVSKCFRLADPRSYGSKNPGATNVLRSGNKKAAILTLLGDGAKGFLAVWLVKHFGPGYGVHENGVALVAIAVFLGHLWPVFFRFVGGKGVATALGVLLALNGWLGLATLVTWLVIAYAFRYSSLAALIAAIFAPFYYGLLFGPDVILLAVLAMSILLVYRHSKNIGNLLAGKESRLGSKKK</sequence>
<evidence type="ECO:0000255" key="1">
    <source>
        <dbReference type="HAMAP-Rule" id="MF_01043"/>
    </source>
</evidence>
<reference key="1">
    <citation type="journal article" date="2007" name="PLoS Genet.">
        <title>Genome analysis of Minibacterium massiliensis highlights the convergent evolution of water-living bacteria.</title>
        <authorList>
            <person name="Audic S."/>
            <person name="Robert C."/>
            <person name="Campagna B."/>
            <person name="Parinello H."/>
            <person name="Claverie J.-M."/>
            <person name="Raoult D."/>
            <person name="Drancourt M."/>
        </authorList>
    </citation>
    <scope>NUCLEOTIDE SEQUENCE [LARGE SCALE GENOMIC DNA]</scope>
    <source>
        <strain>Marseille</strain>
    </source>
</reference>
<dbReference type="EC" id="2.3.1.275" evidence="1"/>
<dbReference type="EMBL" id="CP000269">
    <property type="protein sequence ID" value="ABR89420.1"/>
    <property type="molecule type" value="Genomic_DNA"/>
</dbReference>
<dbReference type="RefSeq" id="WP_012078342.1">
    <property type="nucleotide sequence ID" value="NC_009659.1"/>
</dbReference>
<dbReference type="SMR" id="A6SV70"/>
<dbReference type="STRING" id="375286.mma_0477"/>
<dbReference type="KEGG" id="mms:mma_0477"/>
<dbReference type="eggNOG" id="COG0344">
    <property type="taxonomic scope" value="Bacteria"/>
</dbReference>
<dbReference type="HOGENOM" id="CLU_081254_0_0_4"/>
<dbReference type="OrthoDB" id="9777124at2"/>
<dbReference type="UniPathway" id="UPA00085"/>
<dbReference type="Proteomes" id="UP000006388">
    <property type="component" value="Chromosome"/>
</dbReference>
<dbReference type="GO" id="GO:0005886">
    <property type="term" value="C:plasma membrane"/>
    <property type="evidence" value="ECO:0007669"/>
    <property type="project" value="UniProtKB-SubCell"/>
</dbReference>
<dbReference type="GO" id="GO:0043772">
    <property type="term" value="F:acyl-phosphate glycerol-3-phosphate acyltransferase activity"/>
    <property type="evidence" value="ECO:0007669"/>
    <property type="project" value="UniProtKB-UniRule"/>
</dbReference>
<dbReference type="GO" id="GO:0008654">
    <property type="term" value="P:phospholipid biosynthetic process"/>
    <property type="evidence" value="ECO:0007669"/>
    <property type="project" value="UniProtKB-UniRule"/>
</dbReference>
<dbReference type="HAMAP" id="MF_01043">
    <property type="entry name" value="PlsY"/>
    <property type="match status" value="1"/>
</dbReference>
<dbReference type="InterPro" id="IPR003811">
    <property type="entry name" value="G3P_acylTferase_PlsY"/>
</dbReference>
<dbReference type="NCBIfam" id="TIGR00023">
    <property type="entry name" value="glycerol-3-phosphate 1-O-acyltransferase PlsY"/>
    <property type="match status" value="1"/>
</dbReference>
<dbReference type="PANTHER" id="PTHR30309:SF0">
    <property type="entry name" value="GLYCEROL-3-PHOSPHATE ACYLTRANSFERASE-RELATED"/>
    <property type="match status" value="1"/>
</dbReference>
<dbReference type="PANTHER" id="PTHR30309">
    <property type="entry name" value="INNER MEMBRANE PROTEIN YGIH"/>
    <property type="match status" value="1"/>
</dbReference>
<dbReference type="Pfam" id="PF02660">
    <property type="entry name" value="G3P_acyltransf"/>
    <property type="match status" value="1"/>
</dbReference>
<dbReference type="SMART" id="SM01207">
    <property type="entry name" value="G3P_acyltransf"/>
    <property type="match status" value="1"/>
</dbReference>
<accession>A6SV70</accession>